<feature type="chain" id="PRO_1000120007" description="UPF0145 protein Npun_F4817">
    <location>
        <begin position="1"/>
        <end position="108"/>
    </location>
</feature>
<keyword id="KW-1185">Reference proteome</keyword>
<evidence type="ECO:0000255" key="1">
    <source>
        <dbReference type="HAMAP-Rule" id="MF_00338"/>
    </source>
</evidence>
<name>Y4817_NOSP7</name>
<reference key="1">
    <citation type="journal article" date="2013" name="Plant Physiol.">
        <title>A Nostoc punctiforme Sugar Transporter Necessary to Establish a Cyanobacterium-Plant Symbiosis.</title>
        <authorList>
            <person name="Ekman M."/>
            <person name="Picossi S."/>
            <person name="Campbell E.L."/>
            <person name="Meeks J.C."/>
            <person name="Flores E."/>
        </authorList>
    </citation>
    <scope>NUCLEOTIDE SEQUENCE [LARGE SCALE GENOMIC DNA]</scope>
    <source>
        <strain>ATCC 29133 / PCC 73102</strain>
    </source>
</reference>
<proteinExistence type="inferred from homology"/>
<sequence>MIITTTDVIQGAVIESYLGIVTAEVVYGSNFLRDFLAGIRDIIGGRTASYERLFEQGQRKALEELEQRAQRLGANAVIGIEIDTGTINLDQSGVLLLITATGTAVKMR</sequence>
<accession>B2IZ57</accession>
<organism>
    <name type="scientific">Nostoc punctiforme (strain ATCC 29133 / PCC 73102)</name>
    <dbReference type="NCBI Taxonomy" id="63737"/>
    <lineage>
        <taxon>Bacteria</taxon>
        <taxon>Bacillati</taxon>
        <taxon>Cyanobacteriota</taxon>
        <taxon>Cyanophyceae</taxon>
        <taxon>Nostocales</taxon>
        <taxon>Nostocaceae</taxon>
        <taxon>Nostoc</taxon>
    </lineage>
</organism>
<protein>
    <recommendedName>
        <fullName evidence="1">UPF0145 protein Npun_F4817</fullName>
    </recommendedName>
</protein>
<comment type="similarity">
    <text evidence="1">Belongs to the UPF0145 family.</text>
</comment>
<gene>
    <name type="ordered locus">Npun_F4817</name>
</gene>
<dbReference type="EMBL" id="CP001037">
    <property type="protein sequence ID" value="ACC83164.1"/>
    <property type="molecule type" value="Genomic_DNA"/>
</dbReference>
<dbReference type="RefSeq" id="WP_012411120.1">
    <property type="nucleotide sequence ID" value="NC_010628.1"/>
</dbReference>
<dbReference type="SMR" id="B2IZ57"/>
<dbReference type="EnsemblBacteria" id="ACC83164">
    <property type="protein sequence ID" value="ACC83164"/>
    <property type="gene ID" value="Npun_F4817"/>
</dbReference>
<dbReference type="KEGG" id="npu:Npun_F4817"/>
<dbReference type="eggNOG" id="COG0393">
    <property type="taxonomic scope" value="Bacteria"/>
</dbReference>
<dbReference type="HOGENOM" id="CLU_117144_3_2_3"/>
<dbReference type="OrthoDB" id="9796448at2"/>
<dbReference type="PhylomeDB" id="B2IZ57"/>
<dbReference type="Proteomes" id="UP000001191">
    <property type="component" value="Chromosome"/>
</dbReference>
<dbReference type="Gene3D" id="3.30.110.70">
    <property type="entry name" value="Hypothetical protein apc22750. Chain B"/>
    <property type="match status" value="1"/>
</dbReference>
<dbReference type="HAMAP" id="MF_00338">
    <property type="entry name" value="UPF0145"/>
    <property type="match status" value="1"/>
</dbReference>
<dbReference type="InterPro" id="IPR035439">
    <property type="entry name" value="UPF0145_dom_sf"/>
</dbReference>
<dbReference type="InterPro" id="IPR002765">
    <property type="entry name" value="UPF0145_YbjQ-like"/>
</dbReference>
<dbReference type="PANTHER" id="PTHR34068">
    <property type="entry name" value="UPF0145 PROTEIN YBJQ"/>
    <property type="match status" value="1"/>
</dbReference>
<dbReference type="PANTHER" id="PTHR34068:SF1">
    <property type="entry name" value="UPF0145 PROTEIN YBJQ"/>
    <property type="match status" value="1"/>
</dbReference>
<dbReference type="Pfam" id="PF01906">
    <property type="entry name" value="YbjQ_1"/>
    <property type="match status" value="1"/>
</dbReference>
<dbReference type="SUPFAM" id="SSF117782">
    <property type="entry name" value="YbjQ-like"/>
    <property type="match status" value="1"/>
</dbReference>